<accession>Q4SQJ2</accession>
<sequence length="104" mass="12284">MGTRLKVLRVFKQLQRTRMDVFKDDDIALKAARLKINEEFRKNRNETSEENINEMIKLGSNVETVLRESVLQMEHVGEDKLLLRPRKSLLLENVPYCDEPRKKS</sequence>
<protein>
    <recommendedName>
        <fullName>Complex III assembly factor LYRM7</fullName>
    </recommendedName>
    <alternativeName>
        <fullName>LYR motif-containing protein 7</fullName>
    </alternativeName>
</protein>
<feature type="chain" id="PRO_0000370342" description="Complex III assembly factor LYRM7">
    <location>
        <begin position="1"/>
        <end position="104"/>
    </location>
</feature>
<dbReference type="EMBL" id="CAAE01014532">
    <property type="protein sequence ID" value="CAF97090.1"/>
    <property type="molecule type" value="Genomic_DNA"/>
</dbReference>
<dbReference type="SMR" id="Q4SQJ2"/>
<dbReference type="FunCoup" id="Q4SQJ2">
    <property type="interactions" value="171"/>
</dbReference>
<dbReference type="STRING" id="99883.ENSTNIP00000010283"/>
<dbReference type="Ensembl" id="ENSTNIT00000010464.1">
    <property type="protein sequence ID" value="ENSTNIP00000010283.1"/>
    <property type="gene ID" value="ENSTNIG00000007474.1"/>
</dbReference>
<dbReference type="KEGG" id="tng:GSTEN00014346G001"/>
<dbReference type="GeneTree" id="ENSGT00390000017923"/>
<dbReference type="HOGENOM" id="CLU_147114_1_1_1"/>
<dbReference type="InParanoid" id="Q4SQJ2"/>
<dbReference type="OMA" id="TRQYVFH"/>
<dbReference type="OrthoDB" id="529194at2759"/>
<dbReference type="TreeFam" id="TF324418"/>
<dbReference type="Proteomes" id="UP000007303">
    <property type="component" value="Unassembled WGS sequence"/>
</dbReference>
<dbReference type="GO" id="GO:0005759">
    <property type="term" value="C:mitochondrial matrix"/>
    <property type="evidence" value="ECO:0007669"/>
    <property type="project" value="UniProtKB-SubCell"/>
</dbReference>
<dbReference type="GO" id="GO:0044183">
    <property type="term" value="F:protein folding chaperone"/>
    <property type="evidence" value="ECO:0007669"/>
    <property type="project" value="TreeGrafter"/>
</dbReference>
<dbReference type="GO" id="GO:0034551">
    <property type="term" value="P:mitochondrial respiratory chain complex III assembly"/>
    <property type="evidence" value="ECO:0007669"/>
    <property type="project" value="InterPro"/>
</dbReference>
<dbReference type="CDD" id="cd20267">
    <property type="entry name" value="Complex1_LYR_LYRM7"/>
    <property type="match status" value="1"/>
</dbReference>
<dbReference type="InterPro" id="IPR008011">
    <property type="entry name" value="Complex1_LYR_dom"/>
</dbReference>
<dbReference type="InterPro" id="IPR045298">
    <property type="entry name" value="Complex1_LYR_LYRM7"/>
</dbReference>
<dbReference type="InterPro" id="IPR050435">
    <property type="entry name" value="MZM1/LYRM7"/>
</dbReference>
<dbReference type="PANTHER" id="PTHR46749">
    <property type="entry name" value="COMPLEX III ASSEMBLY FACTOR LYRM7"/>
    <property type="match status" value="1"/>
</dbReference>
<dbReference type="PANTHER" id="PTHR46749:SF1">
    <property type="entry name" value="COMPLEX III ASSEMBLY FACTOR LYRM7"/>
    <property type="match status" value="1"/>
</dbReference>
<dbReference type="Pfam" id="PF05347">
    <property type="entry name" value="Complex1_LYR"/>
    <property type="match status" value="1"/>
</dbReference>
<name>LYRM7_TETNG</name>
<comment type="function">
    <text evidence="1">Assembly factor required for Rieske Fe-S protein UQCRFS1 incorporation into the cytochrome b-c1 (CIII) complex. Functions as a chaperone, binding to this subunit within the mitochondrial matrix and stabilizing it prior to its translocation and insertion into the late CIII dimeric intermediate within the mitochondrial inner membrane (By similarity).</text>
</comment>
<comment type="subunit">
    <text evidence="1">Interacts with UQCRFS1.</text>
</comment>
<comment type="subcellular location">
    <subcellularLocation>
        <location evidence="1">Mitochondrion matrix</location>
    </subcellularLocation>
</comment>
<comment type="similarity">
    <text evidence="2">Belongs to the complex I LYR family.</text>
</comment>
<proteinExistence type="inferred from homology"/>
<reference key="1">
    <citation type="journal article" date="2004" name="Nature">
        <title>Genome duplication in the teleost fish Tetraodon nigroviridis reveals the early vertebrate proto-karyotype.</title>
        <authorList>
            <person name="Jaillon O."/>
            <person name="Aury J.-M."/>
            <person name="Brunet F."/>
            <person name="Petit J.-L."/>
            <person name="Stange-Thomann N."/>
            <person name="Mauceli E."/>
            <person name="Bouneau L."/>
            <person name="Fischer C."/>
            <person name="Ozouf-Costaz C."/>
            <person name="Bernot A."/>
            <person name="Nicaud S."/>
            <person name="Jaffe D."/>
            <person name="Fisher S."/>
            <person name="Lutfalla G."/>
            <person name="Dossat C."/>
            <person name="Segurens B."/>
            <person name="Dasilva C."/>
            <person name="Salanoubat M."/>
            <person name="Levy M."/>
            <person name="Boudet N."/>
            <person name="Castellano S."/>
            <person name="Anthouard V."/>
            <person name="Jubin C."/>
            <person name="Castelli V."/>
            <person name="Katinka M."/>
            <person name="Vacherie B."/>
            <person name="Biemont C."/>
            <person name="Skalli Z."/>
            <person name="Cattolico L."/>
            <person name="Poulain J."/>
            <person name="De Berardinis V."/>
            <person name="Cruaud C."/>
            <person name="Duprat S."/>
            <person name="Brottier P."/>
            <person name="Coutanceau J.-P."/>
            <person name="Gouzy J."/>
            <person name="Parra G."/>
            <person name="Lardier G."/>
            <person name="Chapple C."/>
            <person name="McKernan K.J."/>
            <person name="McEwan P."/>
            <person name="Bosak S."/>
            <person name="Kellis M."/>
            <person name="Volff J.-N."/>
            <person name="Guigo R."/>
            <person name="Zody M.C."/>
            <person name="Mesirov J."/>
            <person name="Lindblad-Toh K."/>
            <person name="Birren B."/>
            <person name="Nusbaum C."/>
            <person name="Kahn D."/>
            <person name="Robinson-Rechavi M."/>
            <person name="Laudet V."/>
            <person name="Schachter V."/>
            <person name="Quetier F."/>
            <person name="Saurin W."/>
            <person name="Scarpelli C."/>
            <person name="Wincker P."/>
            <person name="Lander E.S."/>
            <person name="Weissenbach J."/>
            <person name="Roest Crollius H."/>
        </authorList>
    </citation>
    <scope>NUCLEOTIDE SEQUENCE [LARGE SCALE GENOMIC DNA]</scope>
</reference>
<gene>
    <name type="primary">lyrm7</name>
    <name type="synonym">MZM1L</name>
    <name type="ORF">GSTENG00014346001</name>
</gene>
<evidence type="ECO:0000250" key="1"/>
<evidence type="ECO:0000305" key="2"/>
<keyword id="KW-0143">Chaperone</keyword>
<keyword id="KW-0496">Mitochondrion</keyword>
<keyword id="KW-1185">Reference proteome</keyword>
<organism>
    <name type="scientific">Tetraodon nigroviridis</name>
    <name type="common">Spotted green pufferfish</name>
    <name type="synonym">Chelonodon nigroviridis</name>
    <dbReference type="NCBI Taxonomy" id="99883"/>
    <lineage>
        <taxon>Eukaryota</taxon>
        <taxon>Metazoa</taxon>
        <taxon>Chordata</taxon>
        <taxon>Craniata</taxon>
        <taxon>Vertebrata</taxon>
        <taxon>Euteleostomi</taxon>
        <taxon>Actinopterygii</taxon>
        <taxon>Neopterygii</taxon>
        <taxon>Teleostei</taxon>
        <taxon>Neoteleostei</taxon>
        <taxon>Acanthomorphata</taxon>
        <taxon>Eupercaria</taxon>
        <taxon>Tetraodontiformes</taxon>
        <taxon>Tetradontoidea</taxon>
        <taxon>Tetraodontidae</taxon>
        <taxon>Tetraodon</taxon>
    </lineage>
</organism>